<accession>B5YFA9</accession>
<gene>
    <name evidence="1" type="primary">rpmB</name>
    <name type="ordered locus">DICTH_1398</name>
</gene>
<proteinExistence type="inferred from homology"/>
<comment type="similarity">
    <text evidence="1">Belongs to the bacterial ribosomal protein bL28 family.</text>
</comment>
<reference key="1">
    <citation type="journal article" date="2014" name="Genome Announc.">
        <title>Complete Genome Sequence of the Extreme Thermophile Dictyoglomus thermophilum H-6-12.</title>
        <authorList>
            <person name="Coil D.A."/>
            <person name="Badger J.H."/>
            <person name="Forberger H.C."/>
            <person name="Riggs F."/>
            <person name="Madupu R."/>
            <person name="Fedorova N."/>
            <person name="Ward N."/>
            <person name="Robb F.T."/>
            <person name="Eisen J.A."/>
        </authorList>
    </citation>
    <scope>NUCLEOTIDE SEQUENCE [LARGE SCALE GENOMIC DNA]</scope>
    <source>
        <strain>ATCC 35947 / DSM 3960 / H-6-12</strain>
    </source>
</reference>
<dbReference type="EMBL" id="CP001146">
    <property type="protein sequence ID" value="ACI18992.1"/>
    <property type="molecule type" value="Genomic_DNA"/>
</dbReference>
<dbReference type="RefSeq" id="WP_012547624.1">
    <property type="nucleotide sequence ID" value="NC_011297.1"/>
</dbReference>
<dbReference type="SMR" id="B5YFA9"/>
<dbReference type="STRING" id="309799.DICTH_1398"/>
<dbReference type="PaxDb" id="309799-DICTH_1398"/>
<dbReference type="KEGG" id="dth:DICTH_1398"/>
<dbReference type="eggNOG" id="COG0227">
    <property type="taxonomic scope" value="Bacteria"/>
</dbReference>
<dbReference type="HOGENOM" id="CLU_064548_7_0_0"/>
<dbReference type="OrthoDB" id="9805609at2"/>
<dbReference type="Proteomes" id="UP000001733">
    <property type="component" value="Chromosome"/>
</dbReference>
<dbReference type="GO" id="GO:1990904">
    <property type="term" value="C:ribonucleoprotein complex"/>
    <property type="evidence" value="ECO:0007669"/>
    <property type="project" value="UniProtKB-KW"/>
</dbReference>
<dbReference type="GO" id="GO:0005840">
    <property type="term" value="C:ribosome"/>
    <property type="evidence" value="ECO:0007669"/>
    <property type="project" value="UniProtKB-KW"/>
</dbReference>
<dbReference type="GO" id="GO:0003735">
    <property type="term" value="F:structural constituent of ribosome"/>
    <property type="evidence" value="ECO:0007669"/>
    <property type="project" value="InterPro"/>
</dbReference>
<dbReference type="GO" id="GO:0006412">
    <property type="term" value="P:translation"/>
    <property type="evidence" value="ECO:0007669"/>
    <property type="project" value="UniProtKB-UniRule"/>
</dbReference>
<dbReference type="FunFam" id="2.30.170.40:FF:000002">
    <property type="entry name" value="50S ribosomal protein L28"/>
    <property type="match status" value="1"/>
</dbReference>
<dbReference type="Gene3D" id="2.30.170.40">
    <property type="entry name" value="Ribosomal protein L28/L24"/>
    <property type="match status" value="1"/>
</dbReference>
<dbReference type="HAMAP" id="MF_00373">
    <property type="entry name" value="Ribosomal_bL28"/>
    <property type="match status" value="1"/>
</dbReference>
<dbReference type="InterPro" id="IPR050096">
    <property type="entry name" value="Bacterial_rp_bL28"/>
</dbReference>
<dbReference type="InterPro" id="IPR026569">
    <property type="entry name" value="Ribosomal_bL28"/>
</dbReference>
<dbReference type="InterPro" id="IPR034704">
    <property type="entry name" value="Ribosomal_bL28/bL31-like_sf"/>
</dbReference>
<dbReference type="InterPro" id="IPR001383">
    <property type="entry name" value="Ribosomal_bL28_bact-type"/>
</dbReference>
<dbReference type="InterPro" id="IPR037147">
    <property type="entry name" value="Ribosomal_bL28_sf"/>
</dbReference>
<dbReference type="NCBIfam" id="TIGR00009">
    <property type="entry name" value="L28"/>
    <property type="match status" value="1"/>
</dbReference>
<dbReference type="PANTHER" id="PTHR39080">
    <property type="entry name" value="50S RIBOSOMAL PROTEIN L28"/>
    <property type="match status" value="1"/>
</dbReference>
<dbReference type="PANTHER" id="PTHR39080:SF1">
    <property type="entry name" value="LARGE RIBOSOMAL SUBUNIT PROTEIN BL28A"/>
    <property type="match status" value="1"/>
</dbReference>
<dbReference type="Pfam" id="PF00830">
    <property type="entry name" value="Ribosomal_L28"/>
    <property type="match status" value="1"/>
</dbReference>
<dbReference type="SUPFAM" id="SSF143800">
    <property type="entry name" value="L28p-like"/>
    <property type="match status" value="1"/>
</dbReference>
<feature type="chain" id="PRO_1000121623" description="Large ribosomal subunit protein bL28">
    <location>
        <begin position="1"/>
        <end position="63"/>
    </location>
</feature>
<sequence>MSRRCEICGKGPWTGLQVSHSHRRTKTRWLPNLHKVRALVNGKVKTIKVCTRCLKAGKVQKVV</sequence>
<keyword id="KW-0687">Ribonucleoprotein</keyword>
<keyword id="KW-0689">Ribosomal protein</keyword>
<protein>
    <recommendedName>
        <fullName evidence="1">Large ribosomal subunit protein bL28</fullName>
    </recommendedName>
    <alternativeName>
        <fullName evidence="2">50S ribosomal protein L28</fullName>
    </alternativeName>
</protein>
<name>RL28_DICT6</name>
<organism>
    <name type="scientific">Dictyoglomus thermophilum (strain ATCC 35947 / DSM 3960 / H-6-12)</name>
    <dbReference type="NCBI Taxonomy" id="309799"/>
    <lineage>
        <taxon>Bacteria</taxon>
        <taxon>Pseudomonadati</taxon>
        <taxon>Dictyoglomota</taxon>
        <taxon>Dictyoglomia</taxon>
        <taxon>Dictyoglomales</taxon>
        <taxon>Dictyoglomaceae</taxon>
        <taxon>Dictyoglomus</taxon>
    </lineage>
</organism>
<evidence type="ECO:0000255" key="1">
    <source>
        <dbReference type="HAMAP-Rule" id="MF_00373"/>
    </source>
</evidence>
<evidence type="ECO:0000305" key="2"/>